<accession>A1WVN6</accession>
<name>IXTPA_HALHL</name>
<reference key="1">
    <citation type="submission" date="2006-12" db="EMBL/GenBank/DDBJ databases">
        <title>Complete sequence of Halorhodospira halophila SL1.</title>
        <authorList>
            <consortium name="US DOE Joint Genome Institute"/>
            <person name="Copeland A."/>
            <person name="Lucas S."/>
            <person name="Lapidus A."/>
            <person name="Barry K."/>
            <person name="Detter J.C."/>
            <person name="Glavina del Rio T."/>
            <person name="Hammon N."/>
            <person name="Israni S."/>
            <person name="Dalin E."/>
            <person name="Tice H."/>
            <person name="Pitluck S."/>
            <person name="Saunders E."/>
            <person name="Brettin T."/>
            <person name="Bruce D."/>
            <person name="Han C."/>
            <person name="Tapia R."/>
            <person name="Schmutz J."/>
            <person name="Larimer F."/>
            <person name="Land M."/>
            <person name="Hauser L."/>
            <person name="Kyrpides N."/>
            <person name="Mikhailova N."/>
            <person name="Hoff W."/>
            <person name="Richardson P."/>
        </authorList>
    </citation>
    <scope>NUCLEOTIDE SEQUENCE [LARGE SCALE GENOMIC DNA]</scope>
    <source>
        <strain>DSM 244 / SL1</strain>
    </source>
</reference>
<feature type="chain" id="PRO_1000068424" description="dITP/XTP pyrophosphatase">
    <location>
        <begin position="1"/>
        <end position="199"/>
    </location>
</feature>
<feature type="active site" description="Proton acceptor" evidence="1">
    <location>
        <position position="68"/>
    </location>
</feature>
<feature type="binding site" evidence="1">
    <location>
        <begin position="7"/>
        <end position="12"/>
    </location>
    <ligand>
        <name>substrate</name>
    </ligand>
</feature>
<feature type="binding site" evidence="1">
    <location>
        <position position="68"/>
    </location>
    <ligand>
        <name>Mg(2+)</name>
        <dbReference type="ChEBI" id="CHEBI:18420"/>
    </ligand>
</feature>
<feature type="binding site" evidence="1">
    <location>
        <position position="69"/>
    </location>
    <ligand>
        <name>substrate</name>
    </ligand>
</feature>
<feature type="binding site" evidence="1">
    <location>
        <begin position="153"/>
        <end position="156"/>
    </location>
    <ligand>
        <name>substrate</name>
    </ligand>
</feature>
<feature type="binding site" evidence="1">
    <location>
        <position position="176"/>
    </location>
    <ligand>
        <name>substrate</name>
    </ligand>
</feature>
<feature type="binding site" evidence="1">
    <location>
        <begin position="181"/>
        <end position="182"/>
    </location>
    <ligand>
        <name>substrate</name>
    </ligand>
</feature>
<gene>
    <name type="ordered locus">Hhal_0972</name>
</gene>
<proteinExistence type="inferred from homology"/>
<protein>
    <recommendedName>
        <fullName evidence="1">dITP/XTP pyrophosphatase</fullName>
        <ecNumber evidence="1">3.6.1.66</ecNumber>
    </recommendedName>
    <alternativeName>
        <fullName evidence="1">Non-canonical purine NTP pyrophosphatase</fullName>
    </alternativeName>
    <alternativeName>
        <fullName evidence="1">Non-standard purine NTP pyrophosphatase</fullName>
    </alternativeName>
    <alternativeName>
        <fullName evidence="1">Nucleoside-triphosphate diphosphatase</fullName>
    </alternativeName>
    <alternativeName>
        <fullName evidence="1">Nucleoside-triphosphate pyrophosphatase</fullName>
        <shortName evidence="1">NTPase</shortName>
    </alternativeName>
</protein>
<dbReference type="EC" id="3.6.1.66" evidence="1"/>
<dbReference type="EMBL" id="CP000544">
    <property type="protein sequence ID" value="ABM61748.1"/>
    <property type="molecule type" value="Genomic_DNA"/>
</dbReference>
<dbReference type="RefSeq" id="WP_011813771.1">
    <property type="nucleotide sequence ID" value="NC_008789.1"/>
</dbReference>
<dbReference type="SMR" id="A1WVN6"/>
<dbReference type="STRING" id="349124.Hhal_0972"/>
<dbReference type="KEGG" id="hha:Hhal_0972"/>
<dbReference type="eggNOG" id="COG0127">
    <property type="taxonomic scope" value="Bacteria"/>
</dbReference>
<dbReference type="HOGENOM" id="CLU_082080_0_3_6"/>
<dbReference type="OrthoDB" id="9807456at2"/>
<dbReference type="Proteomes" id="UP000000647">
    <property type="component" value="Chromosome"/>
</dbReference>
<dbReference type="GO" id="GO:0005829">
    <property type="term" value="C:cytosol"/>
    <property type="evidence" value="ECO:0007669"/>
    <property type="project" value="TreeGrafter"/>
</dbReference>
<dbReference type="GO" id="GO:0035870">
    <property type="term" value="F:dITP diphosphatase activity"/>
    <property type="evidence" value="ECO:0007669"/>
    <property type="project" value="RHEA"/>
</dbReference>
<dbReference type="GO" id="GO:0036220">
    <property type="term" value="F:ITP diphosphatase activity"/>
    <property type="evidence" value="ECO:0007669"/>
    <property type="project" value="UniProtKB-EC"/>
</dbReference>
<dbReference type="GO" id="GO:0046872">
    <property type="term" value="F:metal ion binding"/>
    <property type="evidence" value="ECO:0007669"/>
    <property type="project" value="UniProtKB-KW"/>
</dbReference>
<dbReference type="GO" id="GO:0000166">
    <property type="term" value="F:nucleotide binding"/>
    <property type="evidence" value="ECO:0007669"/>
    <property type="project" value="UniProtKB-KW"/>
</dbReference>
<dbReference type="GO" id="GO:0017111">
    <property type="term" value="F:ribonucleoside triphosphate phosphatase activity"/>
    <property type="evidence" value="ECO:0007669"/>
    <property type="project" value="InterPro"/>
</dbReference>
<dbReference type="GO" id="GO:0036222">
    <property type="term" value="F:XTP diphosphatase activity"/>
    <property type="evidence" value="ECO:0007669"/>
    <property type="project" value="RHEA"/>
</dbReference>
<dbReference type="GO" id="GO:0009117">
    <property type="term" value="P:nucleotide metabolic process"/>
    <property type="evidence" value="ECO:0007669"/>
    <property type="project" value="UniProtKB-KW"/>
</dbReference>
<dbReference type="GO" id="GO:0009146">
    <property type="term" value="P:purine nucleoside triphosphate catabolic process"/>
    <property type="evidence" value="ECO:0007669"/>
    <property type="project" value="UniProtKB-UniRule"/>
</dbReference>
<dbReference type="CDD" id="cd00515">
    <property type="entry name" value="HAM1"/>
    <property type="match status" value="1"/>
</dbReference>
<dbReference type="FunFam" id="3.90.950.10:FF:000001">
    <property type="entry name" value="dITP/XTP pyrophosphatase"/>
    <property type="match status" value="1"/>
</dbReference>
<dbReference type="Gene3D" id="3.90.950.10">
    <property type="match status" value="1"/>
</dbReference>
<dbReference type="HAMAP" id="MF_01405">
    <property type="entry name" value="Non_canon_purine_NTPase"/>
    <property type="match status" value="1"/>
</dbReference>
<dbReference type="InterPro" id="IPR020922">
    <property type="entry name" value="dITP/XTP_pyrophosphatase"/>
</dbReference>
<dbReference type="InterPro" id="IPR029001">
    <property type="entry name" value="ITPase-like_fam"/>
</dbReference>
<dbReference type="InterPro" id="IPR002637">
    <property type="entry name" value="RdgB/HAM1"/>
</dbReference>
<dbReference type="NCBIfam" id="TIGR00042">
    <property type="entry name" value="RdgB/HAM1 family non-canonical purine NTP pyrophosphatase"/>
    <property type="match status" value="1"/>
</dbReference>
<dbReference type="PANTHER" id="PTHR11067:SF9">
    <property type="entry name" value="INOSINE TRIPHOSPHATE PYROPHOSPHATASE"/>
    <property type="match status" value="1"/>
</dbReference>
<dbReference type="PANTHER" id="PTHR11067">
    <property type="entry name" value="INOSINE TRIPHOSPHATE PYROPHOSPHATASE/HAM1 PROTEIN"/>
    <property type="match status" value="1"/>
</dbReference>
<dbReference type="Pfam" id="PF01725">
    <property type="entry name" value="Ham1p_like"/>
    <property type="match status" value="1"/>
</dbReference>
<dbReference type="SUPFAM" id="SSF52972">
    <property type="entry name" value="ITPase-like"/>
    <property type="match status" value="1"/>
</dbReference>
<sequence length="199" mass="20901">MKIVLATGNAGKLAEMTRMLQGYDAEVVRQGHLGIDSPAETGLTFVENALIKARHCAERSGLPAVADDSGLAVPALGGEPGIYSARYAGSDAGDAANIERLLAELSERGQGDRRGTFHCVMVYLRHAADPAPVIAHGSWTGRIVETPRGHHGFGYDPVFEDPELGQTAAELDAPAKDARSHRGQALRALIQGIAAEVAG</sequence>
<keyword id="KW-0378">Hydrolase</keyword>
<keyword id="KW-0460">Magnesium</keyword>
<keyword id="KW-0479">Metal-binding</keyword>
<keyword id="KW-0546">Nucleotide metabolism</keyword>
<keyword id="KW-0547">Nucleotide-binding</keyword>
<keyword id="KW-1185">Reference proteome</keyword>
<comment type="function">
    <text evidence="1">Pyrophosphatase that catalyzes the hydrolysis of nucleoside triphosphates to their monophosphate derivatives, with a high preference for the non-canonical purine nucleotides XTP (xanthosine triphosphate), dITP (deoxyinosine triphosphate) and ITP. Seems to function as a house-cleaning enzyme that removes non-canonical purine nucleotides from the nucleotide pool, thus preventing their incorporation into DNA/RNA and avoiding chromosomal lesions.</text>
</comment>
<comment type="catalytic activity">
    <reaction evidence="1">
        <text>XTP + H2O = XMP + diphosphate + H(+)</text>
        <dbReference type="Rhea" id="RHEA:28610"/>
        <dbReference type="ChEBI" id="CHEBI:15377"/>
        <dbReference type="ChEBI" id="CHEBI:15378"/>
        <dbReference type="ChEBI" id="CHEBI:33019"/>
        <dbReference type="ChEBI" id="CHEBI:57464"/>
        <dbReference type="ChEBI" id="CHEBI:61314"/>
        <dbReference type="EC" id="3.6.1.66"/>
    </reaction>
</comment>
<comment type="catalytic activity">
    <reaction evidence="1">
        <text>dITP + H2O = dIMP + diphosphate + H(+)</text>
        <dbReference type="Rhea" id="RHEA:28342"/>
        <dbReference type="ChEBI" id="CHEBI:15377"/>
        <dbReference type="ChEBI" id="CHEBI:15378"/>
        <dbReference type="ChEBI" id="CHEBI:33019"/>
        <dbReference type="ChEBI" id="CHEBI:61194"/>
        <dbReference type="ChEBI" id="CHEBI:61382"/>
        <dbReference type="EC" id="3.6.1.66"/>
    </reaction>
</comment>
<comment type="catalytic activity">
    <reaction evidence="1">
        <text>ITP + H2O = IMP + diphosphate + H(+)</text>
        <dbReference type="Rhea" id="RHEA:29399"/>
        <dbReference type="ChEBI" id="CHEBI:15377"/>
        <dbReference type="ChEBI" id="CHEBI:15378"/>
        <dbReference type="ChEBI" id="CHEBI:33019"/>
        <dbReference type="ChEBI" id="CHEBI:58053"/>
        <dbReference type="ChEBI" id="CHEBI:61402"/>
        <dbReference type="EC" id="3.6.1.66"/>
    </reaction>
</comment>
<comment type="cofactor">
    <cofactor evidence="1">
        <name>Mg(2+)</name>
        <dbReference type="ChEBI" id="CHEBI:18420"/>
    </cofactor>
    <text evidence="1">Binds 1 Mg(2+) ion per subunit.</text>
</comment>
<comment type="subunit">
    <text evidence="1">Homodimer.</text>
</comment>
<comment type="similarity">
    <text evidence="1">Belongs to the HAM1 NTPase family.</text>
</comment>
<organism>
    <name type="scientific">Halorhodospira halophila (strain DSM 244 / SL1)</name>
    <name type="common">Ectothiorhodospira halophila (strain DSM 244 / SL1)</name>
    <dbReference type="NCBI Taxonomy" id="349124"/>
    <lineage>
        <taxon>Bacteria</taxon>
        <taxon>Pseudomonadati</taxon>
        <taxon>Pseudomonadota</taxon>
        <taxon>Gammaproteobacteria</taxon>
        <taxon>Chromatiales</taxon>
        <taxon>Ectothiorhodospiraceae</taxon>
        <taxon>Halorhodospira</taxon>
    </lineage>
</organism>
<evidence type="ECO:0000255" key="1">
    <source>
        <dbReference type="HAMAP-Rule" id="MF_01405"/>
    </source>
</evidence>